<dbReference type="EMBL" id="AJ235272">
    <property type="protein sequence ID" value="CAA14980.1"/>
    <property type="molecule type" value="Genomic_DNA"/>
</dbReference>
<dbReference type="PIR" id="B71657">
    <property type="entry name" value="B71657"/>
</dbReference>
<dbReference type="RefSeq" id="NP_220904.1">
    <property type="nucleotide sequence ID" value="NC_000963.1"/>
</dbReference>
<dbReference type="SMR" id="Q9ZD19"/>
<dbReference type="STRING" id="272947.gene:17555611"/>
<dbReference type="EnsemblBacteria" id="CAA14980">
    <property type="protein sequence ID" value="CAA14980"/>
    <property type="gene ID" value="CAA14980"/>
</dbReference>
<dbReference type="KEGG" id="rpr:RP531"/>
<dbReference type="PATRIC" id="fig|272947.5.peg.539"/>
<dbReference type="eggNOG" id="COG0290">
    <property type="taxonomic scope" value="Bacteria"/>
</dbReference>
<dbReference type="HOGENOM" id="CLU_054919_3_2_5"/>
<dbReference type="OrthoDB" id="9806014at2"/>
<dbReference type="Proteomes" id="UP000002480">
    <property type="component" value="Chromosome"/>
</dbReference>
<dbReference type="GO" id="GO:0005829">
    <property type="term" value="C:cytosol"/>
    <property type="evidence" value="ECO:0007669"/>
    <property type="project" value="TreeGrafter"/>
</dbReference>
<dbReference type="GO" id="GO:0016020">
    <property type="term" value="C:membrane"/>
    <property type="evidence" value="ECO:0007669"/>
    <property type="project" value="TreeGrafter"/>
</dbReference>
<dbReference type="GO" id="GO:0043022">
    <property type="term" value="F:ribosome binding"/>
    <property type="evidence" value="ECO:0007669"/>
    <property type="project" value="TreeGrafter"/>
</dbReference>
<dbReference type="GO" id="GO:0003743">
    <property type="term" value="F:translation initiation factor activity"/>
    <property type="evidence" value="ECO:0007669"/>
    <property type="project" value="UniProtKB-UniRule"/>
</dbReference>
<dbReference type="GO" id="GO:0032790">
    <property type="term" value="P:ribosome disassembly"/>
    <property type="evidence" value="ECO:0007669"/>
    <property type="project" value="TreeGrafter"/>
</dbReference>
<dbReference type="FunFam" id="3.10.20.80:FF:000001">
    <property type="entry name" value="Translation initiation factor IF-3"/>
    <property type="match status" value="1"/>
</dbReference>
<dbReference type="FunFam" id="3.30.110.10:FF:000001">
    <property type="entry name" value="Translation initiation factor IF-3"/>
    <property type="match status" value="1"/>
</dbReference>
<dbReference type="Gene3D" id="3.30.110.10">
    <property type="entry name" value="Translation initiation factor 3 (IF-3), C-terminal domain"/>
    <property type="match status" value="1"/>
</dbReference>
<dbReference type="Gene3D" id="3.10.20.80">
    <property type="entry name" value="Translation initiation factor 3 (IF-3), N-terminal domain"/>
    <property type="match status" value="1"/>
</dbReference>
<dbReference type="HAMAP" id="MF_00080">
    <property type="entry name" value="IF_3"/>
    <property type="match status" value="1"/>
</dbReference>
<dbReference type="InterPro" id="IPR036788">
    <property type="entry name" value="T_IF-3_C_sf"/>
</dbReference>
<dbReference type="InterPro" id="IPR036787">
    <property type="entry name" value="T_IF-3_N_sf"/>
</dbReference>
<dbReference type="InterPro" id="IPR019813">
    <property type="entry name" value="Translation_initiation_fac3_CS"/>
</dbReference>
<dbReference type="InterPro" id="IPR001288">
    <property type="entry name" value="Translation_initiation_fac_3"/>
</dbReference>
<dbReference type="InterPro" id="IPR019815">
    <property type="entry name" value="Translation_initiation_fac_3_C"/>
</dbReference>
<dbReference type="InterPro" id="IPR019814">
    <property type="entry name" value="Translation_initiation_fac_3_N"/>
</dbReference>
<dbReference type="NCBIfam" id="TIGR00168">
    <property type="entry name" value="infC"/>
    <property type="match status" value="1"/>
</dbReference>
<dbReference type="PANTHER" id="PTHR10938">
    <property type="entry name" value="TRANSLATION INITIATION FACTOR IF-3"/>
    <property type="match status" value="1"/>
</dbReference>
<dbReference type="PANTHER" id="PTHR10938:SF0">
    <property type="entry name" value="TRANSLATION INITIATION FACTOR IF-3, MITOCHONDRIAL"/>
    <property type="match status" value="1"/>
</dbReference>
<dbReference type="Pfam" id="PF00707">
    <property type="entry name" value="IF3_C"/>
    <property type="match status" value="1"/>
</dbReference>
<dbReference type="Pfam" id="PF05198">
    <property type="entry name" value="IF3_N"/>
    <property type="match status" value="1"/>
</dbReference>
<dbReference type="SUPFAM" id="SSF55200">
    <property type="entry name" value="Translation initiation factor IF3, C-terminal domain"/>
    <property type="match status" value="1"/>
</dbReference>
<dbReference type="SUPFAM" id="SSF54364">
    <property type="entry name" value="Translation initiation factor IF3, N-terminal domain"/>
    <property type="match status" value="1"/>
</dbReference>
<dbReference type="PROSITE" id="PS00938">
    <property type="entry name" value="IF3"/>
    <property type="match status" value="1"/>
</dbReference>
<protein>
    <recommendedName>
        <fullName evidence="1">Translation initiation factor IF-3</fullName>
    </recommendedName>
</protein>
<accession>Q9ZD19</accession>
<evidence type="ECO:0000255" key="1">
    <source>
        <dbReference type="HAMAP-Rule" id="MF_00080"/>
    </source>
</evidence>
<gene>
    <name evidence="1" type="primary">infC</name>
    <name type="ordered locus">RP531</name>
</gene>
<keyword id="KW-0963">Cytoplasm</keyword>
<keyword id="KW-0396">Initiation factor</keyword>
<keyword id="KW-0648">Protein biosynthesis</keyword>
<keyword id="KW-1185">Reference proteome</keyword>
<proteinExistence type="inferred from homology"/>
<comment type="function">
    <text evidence="1">IF-3 binds to the 30S ribosomal subunit and shifts the equilibrium between 70S ribosomes and their 50S and 30S subunits in favor of the free subunits, thus enhancing the availability of 30S subunits on which protein synthesis initiation begins.</text>
</comment>
<comment type="subunit">
    <text evidence="1">Monomer.</text>
</comment>
<comment type="subcellular location">
    <subcellularLocation>
        <location evidence="1">Cytoplasm</location>
    </subcellularLocation>
</comment>
<comment type="similarity">
    <text evidence="1">Belongs to the IF-3 family.</text>
</comment>
<name>IF3_RICPR</name>
<sequence>MYLFINIIWRNFISKNNLPKANREIKAKEVRLVDENSEMYGVVNIREALDMAERAGLDLVEISPNAVPPVCKILDFGKFKYESKKRLHEARKKQKVVVLKEMKFKPNISIGDFETKLRKIKEFLKDGDKVKISLWFKGREILHKEVGHELFKRIELALEGLIKIDQHAKMEGKQMIMIVSPDIKV</sequence>
<organism>
    <name type="scientific">Rickettsia prowazekii (strain Madrid E)</name>
    <dbReference type="NCBI Taxonomy" id="272947"/>
    <lineage>
        <taxon>Bacteria</taxon>
        <taxon>Pseudomonadati</taxon>
        <taxon>Pseudomonadota</taxon>
        <taxon>Alphaproteobacteria</taxon>
        <taxon>Rickettsiales</taxon>
        <taxon>Rickettsiaceae</taxon>
        <taxon>Rickettsieae</taxon>
        <taxon>Rickettsia</taxon>
        <taxon>typhus group</taxon>
    </lineage>
</organism>
<feature type="chain" id="PRO_0000177568" description="Translation initiation factor IF-3">
    <location>
        <begin position="1"/>
        <end position="185"/>
    </location>
</feature>
<reference key="1">
    <citation type="journal article" date="1998" name="Nature">
        <title>The genome sequence of Rickettsia prowazekii and the origin of mitochondria.</title>
        <authorList>
            <person name="Andersson S.G.E."/>
            <person name="Zomorodipour A."/>
            <person name="Andersson J.O."/>
            <person name="Sicheritz-Ponten T."/>
            <person name="Alsmark U.C.M."/>
            <person name="Podowski R.M."/>
            <person name="Naeslund A.K."/>
            <person name="Eriksson A.-S."/>
            <person name="Winkler H.H."/>
            <person name="Kurland C.G."/>
        </authorList>
    </citation>
    <scope>NUCLEOTIDE SEQUENCE [LARGE SCALE GENOMIC DNA]</scope>
    <source>
        <strain>Madrid E</strain>
    </source>
</reference>